<organism>
    <name type="scientific">Pongo abelii</name>
    <name type="common">Sumatran orangutan</name>
    <name type="synonym">Pongo pygmaeus abelii</name>
    <dbReference type="NCBI Taxonomy" id="9601"/>
    <lineage>
        <taxon>Eukaryota</taxon>
        <taxon>Metazoa</taxon>
        <taxon>Chordata</taxon>
        <taxon>Craniata</taxon>
        <taxon>Vertebrata</taxon>
        <taxon>Euteleostomi</taxon>
        <taxon>Mammalia</taxon>
        <taxon>Eutheria</taxon>
        <taxon>Euarchontoglires</taxon>
        <taxon>Primates</taxon>
        <taxon>Haplorrhini</taxon>
        <taxon>Catarrhini</taxon>
        <taxon>Hominidae</taxon>
        <taxon>Pongo</taxon>
    </lineage>
</organism>
<comment type="function">
    <text evidence="3 4">Histone demethylase that specifically demethylates 'Lys-9' and 'Lys-36' residues of histone H3, thereby playing a central role in histone code (By similarity). Does not demethylate histone H3 'Lys-4', H3 'Lys-27' nor H4 'Lys-20'. Demethylates trimethylated H3 'Lys-9' and H3 'Lys-36' residue, while it has no activity on mono- and dimethylated residues. Demethylation of Lys residue generates formaldehyde and succinate. Participates in transcriptional repression of ASCL2 and E2F-responsive promoters via the recruitment of histone deacetylases and NCOR1, respectively (By similarity).</text>
</comment>
<comment type="catalytic activity">
    <reaction evidence="3">
        <text>N(6),N(6),N(6)-trimethyl-L-lysyl(9)-[histone H3] + 2 2-oxoglutarate + 2 O2 = N(6)-methyl-L-lysyl(9)-[histone H3] + 2 formaldehyde + 2 succinate + 2 CO2</text>
        <dbReference type="Rhea" id="RHEA:60200"/>
        <dbReference type="Rhea" id="RHEA-COMP:15538"/>
        <dbReference type="Rhea" id="RHEA-COMP:15542"/>
        <dbReference type="ChEBI" id="CHEBI:15379"/>
        <dbReference type="ChEBI" id="CHEBI:16526"/>
        <dbReference type="ChEBI" id="CHEBI:16810"/>
        <dbReference type="ChEBI" id="CHEBI:16842"/>
        <dbReference type="ChEBI" id="CHEBI:30031"/>
        <dbReference type="ChEBI" id="CHEBI:61929"/>
        <dbReference type="ChEBI" id="CHEBI:61961"/>
        <dbReference type="EC" id="1.14.11.66"/>
    </reaction>
</comment>
<comment type="catalytic activity">
    <reaction evidence="3">
        <text>N(6),N(6),N(6)-trimethyl-L-lysyl(36)-[histone H3] + 2 2-oxoglutarate + 2 O2 = N(6)-methyl-L-lysyl(36)-[histone H3] + 2 formaldehyde + 2 succinate + 2 CO2</text>
        <dbReference type="Rhea" id="RHEA:60236"/>
        <dbReference type="Rhea" id="RHEA-COMP:9786"/>
        <dbReference type="Rhea" id="RHEA-COMP:15536"/>
        <dbReference type="ChEBI" id="CHEBI:15379"/>
        <dbReference type="ChEBI" id="CHEBI:16526"/>
        <dbReference type="ChEBI" id="CHEBI:16810"/>
        <dbReference type="ChEBI" id="CHEBI:16842"/>
        <dbReference type="ChEBI" id="CHEBI:30031"/>
        <dbReference type="ChEBI" id="CHEBI:61929"/>
        <dbReference type="ChEBI" id="CHEBI:61961"/>
        <dbReference type="EC" id="1.14.11.69"/>
    </reaction>
</comment>
<comment type="cofactor">
    <cofactor evidence="3">
        <name>Fe(2+)</name>
        <dbReference type="ChEBI" id="CHEBI:29033"/>
    </cofactor>
    <text evidence="3">Binds 1 Fe(2+) ion per subunit.</text>
</comment>
<comment type="subunit">
    <text evidence="3">Interacts with histone deacetylase proteins HDAC1, HDAC2 and HDAC3. Interacts with RB and NCOR1 (By similarity). Interacts with VRK1 (By similarity).</text>
</comment>
<comment type="subcellular location">
    <subcellularLocation>
        <location evidence="5">Nucleus</location>
    </subcellularLocation>
</comment>
<comment type="domain">
    <text evidence="3">The 2 Tudor domains recognize and bind methylated histone H3 'Lys-4' residue (H3K4me). Double Tudor domain has an interdigitated structure and the unusual fold is required for its ability to bind methylated histone tails. Trimethylated H3 'Lys-4' (H3K4me3) is bound in a cage of 3 aromatic residues, 2 of which are from the Tudor domain 2, while the binding specificity is determined by side-chain interactions involving residues from the Tudor domain 1. The Tudor domains are also able to bind trimethylated histone H3 'Lys-9' (H3K9me3), di- and trimethylated H4 'Lys-20' (H4K20me2 and H4K20me3). Has high affinity for H4K20me2, blocking recruitment of proteins such as TP53BP1 (By similarity).</text>
</comment>
<comment type="PTM">
    <text evidence="3 4">Ubiquitinated by RNF8 and RNF168, leading to its degradation (By similarity). Degradation promotes accessibility of H4K20me2 mark for DNA repair protein TP53BP1, which is then recruited (By similarity). Also ubiquitinated by the SCF(FBXO22) complex; leading to proteasomal degradation (By similarity).</text>
</comment>
<comment type="similarity">
    <text evidence="9">Belongs to the JHDM3 histone demethylase family.</text>
</comment>
<feature type="initiator methionine" description="Removed" evidence="3">
    <location>
        <position position="1"/>
    </location>
</feature>
<feature type="chain" id="PRO_0000183174" description="Lysine-specific demethylase 4A">
    <location>
        <begin position="2"/>
        <end position="1064"/>
    </location>
</feature>
<feature type="domain" description="JmjN" evidence="5">
    <location>
        <begin position="14"/>
        <end position="56"/>
    </location>
</feature>
<feature type="domain" description="JmjC" evidence="6">
    <location>
        <begin position="142"/>
        <end position="308"/>
    </location>
</feature>
<feature type="domain" description="Tudor 1">
    <location>
        <begin position="897"/>
        <end position="954"/>
    </location>
</feature>
<feature type="domain" description="Tudor 2">
    <location>
        <begin position="955"/>
        <end position="1011"/>
    </location>
</feature>
<feature type="zinc finger region" description="PHD-type 1">
    <location>
        <begin position="709"/>
        <end position="767"/>
    </location>
</feature>
<feature type="zinc finger region" description="C2HC pre-PHD-type" evidence="7">
    <location>
        <begin position="772"/>
        <end position="805"/>
    </location>
</feature>
<feature type="zinc finger region" description="PHD-type 2" evidence="7">
    <location>
        <begin position="828"/>
        <end position="885"/>
    </location>
</feature>
<feature type="region of interest" description="Disordered" evidence="8">
    <location>
        <begin position="358"/>
        <end position="384"/>
    </location>
</feature>
<feature type="region of interest" description="Disordered" evidence="8">
    <location>
        <begin position="501"/>
        <end position="537"/>
    </location>
</feature>
<feature type="region of interest" description="Interaction with NCOR1" evidence="1">
    <location>
        <begin position="597"/>
        <end position="638"/>
    </location>
</feature>
<feature type="region of interest" description="Disordered" evidence="8">
    <location>
        <begin position="616"/>
        <end position="642"/>
    </location>
</feature>
<feature type="compositionally biased region" description="Acidic residues" evidence="8">
    <location>
        <begin position="366"/>
        <end position="382"/>
    </location>
</feature>
<feature type="compositionally biased region" description="Low complexity" evidence="8">
    <location>
        <begin position="509"/>
        <end position="532"/>
    </location>
</feature>
<feature type="compositionally biased region" description="Acidic residues" evidence="8">
    <location>
        <begin position="616"/>
        <end position="634"/>
    </location>
</feature>
<feature type="binding site" evidence="3">
    <location>
        <position position="132"/>
    </location>
    <ligand>
        <name>2-oxoglutarate</name>
        <dbReference type="ChEBI" id="CHEBI:16810"/>
    </ligand>
</feature>
<feature type="binding site" evidence="6">
    <location>
        <position position="188"/>
    </location>
    <ligand>
        <name>Fe cation</name>
        <dbReference type="ChEBI" id="CHEBI:24875"/>
        <note>catalytic</note>
    </ligand>
</feature>
<feature type="binding site" evidence="6">
    <location>
        <position position="190"/>
    </location>
    <ligand>
        <name>Fe cation</name>
        <dbReference type="ChEBI" id="CHEBI:24875"/>
        <note>catalytic</note>
    </ligand>
</feature>
<feature type="binding site" evidence="3">
    <location>
        <position position="198"/>
    </location>
    <ligand>
        <name>2-oxoglutarate</name>
        <dbReference type="ChEBI" id="CHEBI:16810"/>
    </ligand>
</feature>
<feature type="binding site" evidence="3">
    <location>
        <position position="206"/>
    </location>
    <ligand>
        <name>2-oxoglutarate</name>
        <dbReference type="ChEBI" id="CHEBI:16810"/>
    </ligand>
</feature>
<feature type="binding site" evidence="3">
    <location>
        <position position="234"/>
    </location>
    <ligand>
        <name>Zn(2+)</name>
        <dbReference type="ChEBI" id="CHEBI:29105"/>
    </ligand>
</feature>
<feature type="binding site" evidence="3">
    <location>
        <position position="240"/>
    </location>
    <ligand>
        <name>Zn(2+)</name>
        <dbReference type="ChEBI" id="CHEBI:29105"/>
    </ligand>
</feature>
<feature type="binding site" evidence="2">
    <location>
        <position position="241"/>
    </location>
    <ligand>
        <name>2-oxoglutarate</name>
        <dbReference type="ChEBI" id="CHEBI:16810"/>
    </ligand>
</feature>
<feature type="binding site" evidence="6">
    <location>
        <position position="276"/>
    </location>
    <ligand>
        <name>Fe cation</name>
        <dbReference type="ChEBI" id="CHEBI:24875"/>
        <note>catalytic</note>
    </ligand>
</feature>
<feature type="binding site" evidence="3">
    <location>
        <position position="306"/>
    </location>
    <ligand>
        <name>Zn(2+)</name>
        <dbReference type="ChEBI" id="CHEBI:29105"/>
    </ligand>
</feature>
<feature type="binding site" evidence="3">
    <location>
        <position position="308"/>
    </location>
    <ligand>
        <name>Zn(2+)</name>
        <dbReference type="ChEBI" id="CHEBI:29105"/>
    </ligand>
</feature>
<feature type="site" description="Histone H3K4me3 binding" evidence="1">
    <location>
        <position position="945"/>
    </location>
</feature>
<feature type="site" description="Histone H3K4me3 binding" evidence="1">
    <location>
        <position position="967"/>
    </location>
</feature>
<feature type="site" description="Histone H3K4me3 binding" evidence="1">
    <location>
        <position position="973"/>
    </location>
</feature>
<feature type="modified residue" description="N-acetylalanine" evidence="3">
    <location>
        <position position="2"/>
    </location>
</feature>
<feature type="modified residue" description="Phosphoserine" evidence="3">
    <location>
        <position position="523"/>
    </location>
</feature>
<protein>
    <recommendedName>
        <fullName>Lysine-specific demethylase 4A</fullName>
        <ecNumber evidence="3">1.14.11.66</ecNumber>
        <ecNumber evidence="3">1.14.11.69</ecNumber>
    </recommendedName>
    <alternativeName>
        <fullName>JmjC domain-containing histone demethylation protein 3A</fullName>
    </alternativeName>
    <alternativeName>
        <fullName>Jumonji domain-containing protein 2A</fullName>
    </alternativeName>
    <alternativeName>
        <fullName evidence="9">[histone H3]-trimethyl-L-lysine(36) demethylase 4A</fullName>
    </alternativeName>
    <alternativeName>
        <fullName evidence="9">[histone H3]-trimethyl-L-lysine(9) demethylase 4A</fullName>
    </alternativeName>
</protein>
<keyword id="KW-0007">Acetylation</keyword>
<keyword id="KW-0156">Chromatin regulator</keyword>
<keyword id="KW-0223">Dioxygenase</keyword>
<keyword id="KW-0408">Iron</keyword>
<keyword id="KW-0479">Metal-binding</keyword>
<keyword id="KW-0539">Nucleus</keyword>
<keyword id="KW-0560">Oxidoreductase</keyword>
<keyword id="KW-0597">Phosphoprotein</keyword>
<keyword id="KW-1185">Reference proteome</keyword>
<keyword id="KW-0677">Repeat</keyword>
<keyword id="KW-0804">Transcription</keyword>
<keyword id="KW-0805">Transcription regulation</keyword>
<keyword id="KW-0832">Ubl conjugation</keyword>
<keyword id="KW-0862">Zinc</keyword>
<keyword id="KW-0863">Zinc-finger</keyword>
<name>KDM4A_PONAB</name>
<sequence>MASESETLNPSARIMTFYPTMEEFRNFSRYIAYIESQGAHRAGLAKVVPPKEWKPRASYDDIDDLVIPAPIQQLVTGQSGLFTQYNIQKKAMTVREFRKIANSDKYCTPRYSEFEELERKYWKNLTFNPPIYGADVNGTLYEKHVDEWNIGRLRTILDLVEKESGITIEGVNTPYLYFGMWKTSFAWHTEDMDLYSINYLHFGEPKSWYSVPPEHGKRLERLAKGFFPGSAQSCEAFLRHKMTLISPLMLKKYGIPFDKVTQEAGEFMITFPYGYHAGFNHGFNCAESTNFATRRWIEYGKQAVLCSCRKDMVKISMDVFVRKFQPERYKLWKAGKDNTVIDHTLPTPEAAEFLKESELPPRAGNEEECPEDDMEGVEDGEEGDLKTSLAKHRIGTKRHRVCLEIPQEVSQSELFPKEDLSSEQYEMTECPAALAPVRPTHSSVRQVEDGLTFPDYSDSTEVKFEELKNVKLEEEDEEEEQEAAALDLSVNPASVGGRLVFSGSKKKSSSSLGSGSSRDSVSSDSETSEPLSCRAQGQTGVLTVHSYAKGDGRVTVGEPCMRKKGSTARSFSERELAEVADEYMFSLEENKKSKGRRQPLSKLPRHHPLVLQECVSDDETSEQLTPEEEAEETEAWAKPLSQLWQNRPPNFEAEKEFNETMAQQAPHCAVCMIFQTYHQVEFGGFNQNCGNASDLAPQKQRTKPLIPEMCFTSTGCGTDINLSTPYLEEDGTSILVSCKKCSVRVHASCYGVPPAKASEDWMCSRCSANALEEDCCLCSLRGGALQRANDDRWVHVSCAVAILEARFVNIAERSPVDVSKIPLPRFKLKCIFCKKRRKRTAGCCVQCSHGRCPTAFHVSCAQAAGVMMQPDDWPFVVFITCFRHKIPNLERAKGALQSITAGQKVISKHKNGRFYQCEVVRLTTETFYEVNFDDGSFSDNLYPEDIVSQDCLQFGPPAEGEVVQVRWTDGQVYGAKFVASHPIQMYQVEFEDGSQLVVKRDDVYTLDEELPKRVKSRLSVASDMRFNEIFTEKEVKQEKKRQRVINSRYREDYIESALYRAIME</sequence>
<gene>
    <name type="primary">KDM4A</name>
    <name type="synonym">JHDM3A</name>
    <name type="synonym">JMJD2A</name>
</gene>
<reference key="1">
    <citation type="submission" date="2004-11" db="EMBL/GenBank/DDBJ databases">
        <authorList>
            <consortium name="The German cDNA consortium"/>
        </authorList>
    </citation>
    <scope>NUCLEOTIDE SEQUENCE [LARGE SCALE MRNA]</scope>
    <source>
        <tissue>Kidney</tissue>
    </source>
</reference>
<proteinExistence type="evidence at transcript level"/>
<dbReference type="EC" id="1.14.11.66" evidence="3"/>
<dbReference type="EC" id="1.14.11.69" evidence="3"/>
<dbReference type="EMBL" id="CR858028">
    <property type="protein sequence ID" value="CAH90269.1"/>
    <property type="molecule type" value="mRNA"/>
</dbReference>
<dbReference type="RefSeq" id="NP_001125120.1">
    <property type="nucleotide sequence ID" value="NM_001131648.1"/>
</dbReference>
<dbReference type="SMR" id="Q5RD88"/>
<dbReference type="FunCoup" id="Q5RD88">
    <property type="interactions" value="3565"/>
</dbReference>
<dbReference type="STRING" id="9601.ENSPPYP00000001670"/>
<dbReference type="GeneID" id="100172003"/>
<dbReference type="KEGG" id="pon:100172003"/>
<dbReference type="CTD" id="9682"/>
<dbReference type="eggNOG" id="KOG0958">
    <property type="taxonomic scope" value="Eukaryota"/>
</dbReference>
<dbReference type="InParanoid" id="Q5RD88"/>
<dbReference type="OrthoDB" id="9547406at2759"/>
<dbReference type="Proteomes" id="UP000001595">
    <property type="component" value="Unplaced"/>
</dbReference>
<dbReference type="GO" id="GO:0000785">
    <property type="term" value="C:chromatin"/>
    <property type="evidence" value="ECO:0007669"/>
    <property type="project" value="TreeGrafter"/>
</dbReference>
<dbReference type="GO" id="GO:0005634">
    <property type="term" value="C:nucleus"/>
    <property type="evidence" value="ECO:0007669"/>
    <property type="project" value="UniProtKB-SubCell"/>
</dbReference>
<dbReference type="GO" id="GO:0140681">
    <property type="term" value="F:histone H3K36me2/H3K36me3 demethylase activity"/>
    <property type="evidence" value="ECO:0007669"/>
    <property type="project" value="UniProtKB-EC"/>
</dbReference>
<dbReference type="GO" id="GO:0140684">
    <property type="term" value="F:histone H3K9me2/H3K9me3 demethylase activity"/>
    <property type="evidence" value="ECO:0007669"/>
    <property type="project" value="UniProtKB-EC"/>
</dbReference>
<dbReference type="GO" id="GO:0140005">
    <property type="term" value="F:histone H4K20me2 reader activity"/>
    <property type="evidence" value="ECO:0000250"/>
    <property type="project" value="UniProtKB"/>
</dbReference>
<dbReference type="GO" id="GO:0008270">
    <property type="term" value="F:zinc ion binding"/>
    <property type="evidence" value="ECO:0007669"/>
    <property type="project" value="UniProtKB-KW"/>
</dbReference>
<dbReference type="GO" id="GO:0010468">
    <property type="term" value="P:regulation of gene expression"/>
    <property type="evidence" value="ECO:0007669"/>
    <property type="project" value="TreeGrafter"/>
</dbReference>
<dbReference type="CDD" id="cd15713">
    <property type="entry name" value="ePHD_JMJD2A"/>
    <property type="match status" value="1"/>
</dbReference>
<dbReference type="CDD" id="cd15575">
    <property type="entry name" value="PHD_JMJD2A"/>
    <property type="match status" value="1"/>
</dbReference>
<dbReference type="CDD" id="cd20463">
    <property type="entry name" value="Tudor_JMJD2A_rpt1"/>
    <property type="match status" value="1"/>
</dbReference>
<dbReference type="CDD" id="cd20466">
    <property type="entry name" value="Tudor_JMJD2A_rpt2"/>
    <property type="match status" value="1"/>
</dbReference>
<dbReference type="FunFam" id="2.60.120.650:FF:000048">
    <property type="entry name" value="Lysine-specific demethylase 4A"/>
    <property type="match status" value="1"/>
</dbReference>
<dbReference type="FunFam" id="3.30.40.10:FF:000236">
    <property type="entry name" value="Lysine-specific demethylase 4A"/>
    <property type="match status" value="1"/>
</dbReference>
<dbReference type="FunFam" id="3.30.40.10:FF:000029">
    <property type="entry name" value="lysine-specific demethylase 4C isoform X1"/>
    <property type="match status" value="1"/>
</dbReference>
<dbReference type="FunFam" id="3.10.330.70:FF:000001">
    <property type="entry name" value="Putative lysine-specific demethylase 4a"/>
    <property type="match status" value="1"/>
</dbReference>
<dbReference type="Gene3D" id="2.30.30.140">
    <property type="match status" value="1"/>
</dbReference>
<dbReference type="Gene3D" id="3.10.330.70">
    <property type="match status" value="1"/>
</dbReference>
<dbReference type="Gene3D" id="2.60.120.650">
    <property type="entry name" value="Cupin"/>
    <property type="match status" value="1"/>
</dbReference>
<dbReference type="Gene3D" id="3.30.40.10">
    <property type="entry name" value="Zinc/RING finger domain, C3HC4 (zinc finger)"/>
    <property type="match status" value="2"/>
</dbReference>
<dbReference type="InterPro" id="IPR034732">
    <property type="entry name" value="EPHD"/>
</dbReference>
<dbReference type="InterPro" id="IPR003347">
    <property type="entry name" value="JmjC_dom"/>
</dbReference>
<dbReference type="InterPro" id="IPR047482">
    <property type="entry name" value="JMJD2A_ePHD"/>
</dbReference>
<dbReference type="InterPro" id="IPR003349">
    <property type="entry name" value="JmjN"/>
</dbReference>
<dbReference type="InterPro" id="IPR040477">
    <property type="entry name" value="KDM4-like_Tudor"/>
</dbReference>
<dbReference type="InterPro" id="IPR002999">
    <property type="entry name" value="Tudor"/>
</dbReference>
<dbReference type="InterPro" id="IPR047479">
    <property type="entry name" value="Tudor_KDM4A_rpt1"/>
</dbReference>
<dbReference type="InterPro" id="IPR047481">
    <property type="entry name" value="Tudor_KDM4A_rpt2"/>
</dbReference>
<dbReference type="InterPro" id="IPR011011">
    <property type="entry name" value="Znf_FYVE_PHD"/>
</dbReference>
<dbReference type="InterPro" id="IPR001965">
    <property type="entry name" value="Znf_PHD"/>
</dbReference>
<dbReference type="InterPro" id="IPR019787">
    <property type="entry name" value="Znf_PHD-finger"/>
</dbReference>
<dbReference type="InterPro" id="IPR013083">
    <property type="entry name" value="Znf_RING/FYVE/PHD"/>
</dbReference>
<dbReference type="PANTHER" id="PTHR10694">
    <property type="entry name" value="LYSINE-SPECIFIC DEMETHYLASE"/>
    <property type="match status" value="1"/>
</dbReference>
<dbReference type="PANTHER" id="PTHR10694:SF119">
    <property type="entry name" value="LYSINE-SPECIFIC DEMETHYLASE 4A"/>
    <property type="match status" value="1"/>
</dbReference>
<dbReference type="Pfam" id="PF02373">
    <property type="entry name" value="JmjC"/>
    <property type="match status" value="1"/>
</dbReference>
<dbReference type="Pfam" id="PF02375">
    <property type="entry name" value="JmjN"/>
    <property type="match status" value="1"/>
</dbReference>
<dbReference type="Pfam" id="PF13831">
    <property type="entry name" value="PHD_2"/>
    <property type="match status" value="1"/>
</dbReference>
<dbReference type="Pfam" id="PF18104">
    <property type="entry name" value="Tudor_2"/>
    <property type="match status" value="2"/>
</dbReference>
<dbReference type="Pfam" id="PF13832">
    <property type="entry name" value="zf-HC5HC2H_2"/>
    <property type="match status" value="1"/>
</dbReference>
<dbReference type="SMART" id="SM00558">
    <property type="entry name" value="JmjC"/>
    <property type="match status" value="1"/>
</dbReference>
<dbReference type="SMART" id="SM00545">
    <property type="entry name" value="JmjN"/>
    <property type="match status" value="1"/>
</dbReference>
<dbReference type="SMART" id="SM00249">
    <property type="entry name" value="PHD"/>
    <property type="match status" value="2"/>
</dbReference>
<dbReference type="SMART" id="SM00333">
    <property type="entry name" value="TUDOR"/>
    <property type="match status" value="2"/>
</dbReference>
<dbReference type="SUPFAM" id="SSF51197">
    <property type="entry name" value="Clavaminate synthase-like"/>
    <property type="match status" value="1"/>
</dbReference>
<dbReference type="SUPFAM" id="SSF57903">
    <property type="entry name" value="FYVE/PHD zinc finger"/>
    <property type="match status" value="1"/>
</dbReference>
<dbReference type="SUPFAM" id="SSF63748">
    <property type="entry name" value="Tudor/PWWP/MBT"/>
    <property type="match status" value="2"/>
</dbReference>
<dbReference type="PROSITE" id="PS51805">
    <property type="entry name" value="EPHD"/>
    <property type="match status" value="1"/>
</dbReference>
<dbReference type="PROSITE" id="PS51184">
    <property type="entry name" value="JMJC"/>
    <property type="match status" value="1"/>
</dbReference>
<dbReference type="PROSITE" id="PS51183">
    <property type="entry name" value="JMJN"/>
    <property type="match status" value="1"/>
</dbReference>
<accession>Q5RD88</accession>
<evidence type="ECO:0000250" key="1"/>
<evidence type="ECO:0000250" key="2">
    <source>
        <dbReference type="UniProtKB" id="B2RXH2"/>
    </source>
</evidence>
<evidence type="ECO:0000250" key="3">
    <source>
        <dbReference type="UniProtKB" id="O75164"/>
    </source>
</evidence>
<evidence type="ECO:0000250" key="4">
    <source>
        <dbReference type="UniProtKB" id="Q8BW72"/>
    </source>
</evidence>
<evidence type="ECO:0000255" key="5">
    <source>
        <dbReference type="PROSITE-ProRule" id="PRU00537"/>
    </source>
</evidence>
<evidence type="ECO:0000255" key="6">
    <source>
        <dbReference type="PROSITE-ProRule" id="PRU00538"/>
    </source>
</evidence>
<evidence type="ECO:0000255" key="7">
    <source>
        <dbReference type="PROSITE-ProRule" id="PRU01146"/>
    </source>
</evidence>
<evidence type="ECO:0000256" key="8">
    <source>
        <dbReference type="SAM" id="MobiDB-lite"/>
    </source>
</evidence>
<evidence type="ECO:0000305" key="9"/>